<reference key="1">
    <citation type="journal article" date="2006" name="Genome Res.">
        <title>Skewed genomic variability in strains of the toxigenic bacterial pathogen, Clostridium perfringens.</title>
        <authorList>
            <person name="Myers G.S.A."/>
            <person name="Rasko D.A."/>
            <person name="Cheung J.K."/>
            <person name="Ravel J."/>
            <person name="Seshadri R."/>
            <person name="DeBoy R.T."/>
            <person name="Ren Q."/>
            <person name="Varga J."/>
            <person name="Awad M.M."/>
            <person name="Brinkac L.M."/>
            <person name="Daugherty S.C."/>
            <person name="Haft D.H."/>
            <person name="Dodson R.J."/>
            <person name="Madupu R."/>
            <person name="Nelson W.C."/>
            <person name="Rosovitz M.J."/>
            <person name="Sullivan S.A."/>
            <person name="Khouri H."/>
            <person name="Dimitrov G.I."/>
            <person name="Watkins K.L."/>
            <person name="Mulligan S."/>
            <person name="Benton J."/>
            <person name="Radune D."/>
            <person name="Fisher D.J."/>
            <person name="Atkins H.S."/>
            <person name="Hiscox T."/>
            <person name="Jost B.H."/>
            <person name="Billington S.J."/>
            <person name="Songer J.G."/>
            <person name="McClane B.A."/>
            <person name="Titball R.W."/>
            <person name="Rood J.I."/>
            <person name="Melville S.B."/>
            <person name="Paulsen I.T."/>
        </authorList>
    </citation>
    <scope>NUCLEOTIDE SEQUENCE [LARGE SCALE GENOMIC DNA]</scope>
    <source>
        <strain>ATCC 13124 / DSM 756 / JCM 1290 / NCIMB 6125 / NCTC 8237 / S 107 / Type A</strain>
    </source>
</reference>
<sequence>MSKIIGIDLGTTNSCVAVMEGGEPVVITNSEGARTTPSVVSFQANGERLVGQVAKRQAITNPDKTIMSIKRHMGTDYKVNIDGKDYTPQEISAMILQKLKADAEAYLGEKVTEAVITVPAYFNDAERQATKDAGRIAGLDVKRIINEPTAASLAYGLDKMDSAHKILVYDLGGGTFDVSILDLGDGVFEVVSTNGDARLGGDDFDQRIIDYIAEDFKAQNGIDLRQDKMALQRLKEAAEKAKIELSSSTQTLINLPFITADATGPKHIDMTLTRAKFNELTHDLVERTINIMKEALKSGNVSLNDIDKVILVGGSTRIPAVQEAVKNFTGKEPSKGVNPDECVAMGAAIQAGVLTGDVKDVLLLDVTPLTLGIETLGGVATPLIERNTTIPARKSQIFSTAADNQTSVEIHVVQGERQMAADNKTLGRFTLSGIAPAPRGIPQIEVAFDIDANGIVKVSATDKATGKEANITITASTNLSDAEIDKAVKEAEQFAEEDKKRKEAIEVKNNAEQTVYQTEKTLNELGDKVSAEEKSEIEAKIEEVKKVKDGDDIEAIKKAMEDLTQAFYKVSEKLYQQNGGAQGQGFDPNNMGGANAGAGATNNNDDNVVDADFEVQDDK</sequence>
<accession>Q0TNS7</accession>
<feature type="chain" id="PRO_1000059544" description="Chaperone protein DnaK">
    <location>
        <begin position="1"/>
        <end position="619"/>
    </location>
</feature>
<feature type="region of interest" description="Disordered" evidence="2">
    <location>
        <begin position="578"/>
        <end position="619"/>
    </location>
</feature>
<feature type="compositionally biased region" description="Low complexity" evidence="2">
    <location>
        <begin position="589"/>
        <end position="606"/>
    </location>
</feature>
<feature type="compositionally biased region" description="Acidic residues" evidence="2">
    <location>
        <begin position="607"/>
        <end position="619"/>
    </location>
</feature>
<feature type="modified residue" description="Phosphothreonine; by autocatalysis" evidence="1">
    <location>
        <position position="175"/>
    </location>
</feature>
<protein>
    <recommendedName>
        <fullName evidence="1">Chaperone protein DnaK</fullName>
    </recommendedName>
    <alternativeName>
        <fullName evidence="1">HSP70</fullName>
    </alternativeName>
    <alternativeName>
        <fullName evidence="1">Heat shock 70 kDa protein</fullName>
    </alternativeName>
    <alternativeName>
        <fullName evidence="1">Heat shock protein 70</fullName>
    </alternativeName>
</protein>
<dbReference type="EMBL" id="CP000246">
    <property type="protein sequence ID" value="ABG85010.1"/>
    <property type="molecule type" value="Genomic_DNA"/>
</dbReference>
<dbReference type="RefSeq" id="WP_003454824.1">
    <property type="nucleotide sequence ID" value="NC_008261.1"/>
</dbReference>
<dbReference type="SMR" id="Q0TNS7"/>
<dbReference type="STRING" id="195103.CPF_2290"/>
<dbReference type="PaxDb" id="195103-CPF_2290"/>
<dbReference type="KEGG" id="cpf:CPF_2290"/>
<dbReference type="eggNOG" id="COG0443">
    <property type="taxonomic scope" value="Bacteria"/>
</dbReference>
<dbReference type="HOGENOM" id="CLU_005965_2_4_9"/>
<dbReference type="Proteomes" id="UP000001823">
    <property type="component" value="Chromosome"/>
</dbReference>
<dbReference type="GO" id="GO:0005524">
    <property type="term" value="F:ATP binding"/>
    <property type="evidence" value="ECO:0007669"/>
    <property type="project" value="UniProtKB-UniRule"/>
</dbReference>
<dbReference type="GO" id="GO:0140662">
    <property type="term" value="F:ATP-dependent protein folding chaperone"/>
    <property type="evidence" value="ECO:0007669"/>
    <property type="project" value="InterPro"/>
</dbReference>
<dbReference type="GO" id="GO:0051082">
    <property type="term" value="F:unfolded protein binding"/>
    <property type="evidence" value="ECO:0007669"/>
    <property type="project" value="InterPro"/>
</dbReference>
<dbReference type="CDD" id="cd10234">
    <property type="entry name" value="ASKHA_NBD_HSP70_DnaK-like"/>
    <property type="match status" value="1"/>
</dbReference>
<dbReference type="FunFam" id="2.60.34.10:FF:000014">
    <property type="entry name" value="Chaperone protein DnaK HSP70"/>
    <property type="match status" value="1"/>
</dbReference>
<dbReference type="FunFam" id="1.20.1270.10:FF:000001">
    <property type="entry name" value="Molecular chaperone DnaK"/>
    <property type="match status" value="1"/>
</dbReference>
<dbReference type="FunFam" id="3.30.420.40:FF:000071">
    <property type="entry name" value="Molecular chaperone DnaK"/>
    <property type="match status" value="1"/>
</dbReference>
<dbReference type="FunFam" id="3.90.640.10:FF:000003">
    <property type="entry name" value="Molecular chaperone DnaK"/>
    <property type="match status" value="1"/>
</dbReference>
<dbReference type="Gene3D" id="1.20.1270.10">
    <property type="match status" value="1"/>
</dbReference>
<dbReference type="Gene3D" id="3.30.420.40">
    <property type="match status" value="2"/>
</dbReference>
<dbReference type="Gene3D" id="3.90.640.10">
    <property type="entry name" value="Actin, Chain A, domain 4"/>
    <property type="match status" value="1"/>
</dbReference>
<dbReference type="Gene3D" id="2.60.34.10">
    <property type="entry name" value="Substrate Binding Domain Of DNAk, Chain A, domain 1"/>
    <property type="match status" value="1"/>
</dbReference>
<dbReference type="HAMAP" id="MF_00332">
    <property type="entry name" value="DnaK"/>
    <property type="match status" value="1"/>
</dbReference>
<dbReference type="InterPro" id="IPR043129">
    <property type="entry name" value="ATPase_NBD"/>
</dbReference>
<dbReference type="InterPro" id="IPR012725">
    <property type="entry name" value="Chaperone_DnaK"/>
</dbReference>
<dbReference type="InterPro" id="IPR018181">
    <property type="entry name" value="Heat_shock_70_CS"/>
</dbReference>
<dbReference type="InterPro" id="IPR029048">
    <property type="entry name" value="HSP70_C_sf"/>
</dbReference>
<dbReference type="InterPro" id="IPR029047">
    <property type="entry name" value="HSP70_peptide-bd_sf"/>
</dbReference>
<dbReference type="InterPro" id="IPR013126">
    <property type="entry name" value="Hsp_70_fam"/>
</dbReference>
<dbReference type="NCBIfam" id="NF001413">
    <property type="entry name" value="PRK00290.1"/>
    <property type="match status" value="1"/>
</dbReference>
<dbReference type="NCBIfam" id="TIGR02350">
    <property type="entry name" value="prok_dnaK"/>
    <property type="match status" value="1"/>
</dbReference>
<dbReference type="PANTHER" id="PTHR19375">
    <property type="entry name" value="HEAT SHOCK PROTEIN 70KDA"/>
    <property type="match status" value="1"/>
</dbReference>
<dbReference type="Pfam" id="PF00012">
    <property type="entry name" value="HSP70"/>
    <property type="match status" value="1"/>
</dbReference>
<dbReference type="PRINTS" id="PR00301">
    <property type="entry name" value="HEATSHOCK70"/>
</dbReference>
<dbReference type="SUPFAM" id="SSF53067">
    <property type="entry name" value="Actin-like ATPase domain"/>
    <property type="match status" value="2"/>
</dbReference>
<dbReference type="SUPFAM" id="SSF100934">
    <property type="entry name" value="Heat shock protein 70kD (HSP70), C-terminal subdomain"/>
    <property type="match status" value="1"/>
</dbReference>
<dbReference type="SUPFAM" id="SSF100920">
    <property type="entry name" value="Heat shock protein 70kD (HSP70), peptide-binding domain"/>
    <property type="match status" value="1"/>
</dbReference>
<dbReference type="PROSITE" id="PS00297">
    <property type="entry name" value="HSP70_1"/>
    <property type="match status" value="1"/>
</dbReference>
<dbReference type="PROSITE" id="PS00329">
    <property type="entry name" value="HSP70_2"/>
    <property type="match status" value="1"/>
</dbReference>
<dbReference type="PROSITE" id="PS01036">
    <property type="entry name" value="HSP70_3"/>
    <property type="match status" value="1"/>
</dbReference>
<evidence type="ECO:0000255" key="1">
    <source>
        <dbReference type="HAMAP-Rule" id="MF_00332"/>
    </source>
</evidence>
<evidence type="ECO:0000256" key="2">
    <source>
        <dbReference type="SAM" id="MobiDB-lite"/>
    </source>
</evidence>
<name>DNAK_CLOP1</name>
<comment type="function">
    <text evidence="1">Acts as a chaperone.</text>
</comment>
<comment type="induction">
    <text evidence="1">By stress conditions e.g. heat shock.</text>
</comment>
<comment type="similarity">
    <text evidence="1">Belongs to the heat shock protein 70 family.</text>
</comment>
<gene>
    <name evidence="1" type="primary">dnaK</name>
    <name type="ordered locus">CPF_2290</name>
</gene>
<proteinExistence type="inferred from homology"/>
<keyword id="KW-0067">ATP-binding</keyword>
<keyword id="KW-0143">Chaperone</keyword>
<keyword id="KW-0547">Nucleotide-binding</keyword>
<keyword id="KW-0597">Phosphoprotein</keyword>
<keyword id="KW-0346">Stress response</keyword>
<organism>
    <name type="scientific">Clostridium perfringens (strain ATCC 13124 / DSM 756 / JCM 1290 / NCIMB 6125 / NCTC 8237 / Type A)</name>
    <dbReference type="NCBI Taxonomy" id="195103"/>
    <lineage>
        <taxon>Bacteria</taxon>
        <taxon>Bacillati</taxon>
        <taxon>Bacillota</taxon>
        <taxon>Clostridia</taxon>
        <taxon>Eubacteriales</taxon>
        <taxon>Clostridiaceae</taxon>
        <taxon>Clostridium</taxon>
    </lineage>
</organism>